<keyword id="KW-0342">GTP-binding</keyword>
<keyword id="KW-0547">Nucleotide-binding</keyword>
<keyword id="KW-0677">Repeat</keyword>
<keyword id="KW-0690">Ribosome biogenesis</keyword>
<name>DER_LACJO</name>
<comment type="function">
    <text evidence="1">GTPase that plays an essential role in the late steps of ribosome biogenesis.</text>
</comment>
<comment type="subunit">
    <text evidence="1">Associates with the 50S ribosomal subunit.</text>
</comment>
<comment type="similarity">
    <text evidence="1">Belongs to the TRAFAC class TrmE-Era-EngA-EngB-Septin-like GTPase superfamily. EngA (Der) GTPase family.</text>
</comment>
<feature type="chain" id="PRO_1000011648" description="GTPase Der">
    <location>
        <begin position="1"/>
        <end position="435"/>
    </location>
</feature>
<feature type="domain" description="EngA-type G 1">
    <location>
        <begin position="4"/>
        <end position="167"/>
    </location>
</feature>
<feature type="domain" description="EngA-type G 2">
    <location>
        <begin position="175"/>
        <end position="350"/>
    </location>
</feature>
<feature type="domain" description="KH-like" evidence="1">
    <location>
        <begin position="351"/>
        <end position="435"/>
    </location>
</feature>
<feature type="binding site" evidence="1">
    <location>
        <begin position="10"/>
        <end position="17"/>
    </location>
    <ligand>
        <name>GTP</name>
        <dbReference type="ChEBI" id="CHEBI:37565"/>
        <label>1</label>
    </ligand>
</feature>
<feature type="binding site" evidence="1">
    <location>
        <begin position="57"/>
        <end position="61"/>
    </location>
    <ligand>
        <name>GTP</name>
        <dbReference type="ChEBI" id="CHEBI:37565"/>
        <label>1</label>
    </ligand>
</feature>
<feature type="binding site" evidence="1">
    <location>
        <begin position="119"/>
        <end position="122"/>
    </location>
    <ligand>
        <name>GTP</name>
        <dbReference type="ChEBI" id="CHEBI:37565"/>
        <label>1</label>
    </ligand>
</feature>
<feature type="binding site" evidence="1">
    <location>
        <begin position="181"/>
        <end position="188"/>
    </location>
    <ligand>
        <name>GTP</name>
        <dbReference type="ChEBI" id="CHEBI:37565"/>
        <label>2</label>
    </ligand>
</feature>
<feature type="binding site" evidence="1">
    <location>
        <begin position="228"/>
        <end position="232"/>
    </location>
    <ligand>
        <name>GTP</name>
        <dbReference type="ChEBI" id="CHEBI:37565"/>
        <label>2</label>
    </ligand>
</feature>
<feature type="binding site" evidence="1">
    <location>
        <begin position="293"/>
        <end position="296"/>
    </location>
    <ligand>
        <name>GTP</name>
        <dbReference type="ChEBI" id="CHEBI:37565"/>
        <label>2</label>
    </ligand>
</feature>
<evidence type="ECO:0000255" key="1">
    <source>
        <dbReference type="HAMAP-Rule" id="MF_00195"/>
    </source>
</evidence>
<gene>
    <name evidence="1" type="primary">der</name>
    <name type="synonym">engA</name>
    <name type="ordered locus">LJ_1091</name>
</gene>
<reference key="1">
    <citation type="journal article" date="2004" name="Proc. Natl. Acad. Sci. U.S.A.">
        <title>The genome sequence of the probiotic intestinal bacterium Lactobacillus johnsonii NCC 533.</title>
        <authorList>
            <person name="Pridmore R.D."/>
            <person name="Berger B."/>
            <person name="Desiere F."/>
            <person name="Vilanova D."/>
            <person name="Barretto C."/>
            <person name="Pittet A.-C."/>
            <person name="Zwahlen M.-C."/>
            <person name="Rouvet M."/>
            <person name="Altermann E."/>
            <person name="Barrangou R."/>
            <person name="Mollet B."/>
            <person name="Mercenier A."/>
            <person name="Klaenhammer T."/>
            <person name="Arigoni F."/>
            <person name="Schell M.A."/>
        </authorList>
    </citation>
    <scope>NUCLEOTIDE SEQUENCE [LARGE SCALE GENOMIC DNA]</scope>
    <source>
        <strain>CNCM I-1225 / La1 / NCC 533</strain>
    </source>
</reference>
<dbReference type="EMBL" id="AE017198">
    <property type="protein sequence ID" value="AAS08913.1"/>
    <property type="molecule type" value="Genomic_DNA"/>
</dbReference>
<dbReference type="RefSeq" id="WP_004894502.1">
    <property type="nucleotide sequence ID" value="NC_005362.1"/>
</dbReference>
<dbReference type="SMR" id="Q74JL6"/>
<dbReference type="KEGG" id="ljo:LJ_1091"/>
<dbReference type="eggNOG" id="COG1160">
    <property type="taxonomic scope" value="Bacteria"/>
</dbReference>
<dbReference type="HOGENOM" id="CLU_016077_6_2_9"/>
<dbReference type="Proteomes" id="UP000000581">
    <property type="component" value="Chromosome"/>
</dbReference>
<dbReference type="GO" id="GO:0005525">
    <property type="term" value="F:GTP binding"/>
    <property type="evidence" value="ECO:0007669"/>
    <property type="project" value="UniProtKB-UniRule"/>
</dbReference>
<dbReference type="GO" id="GO:0043022">
    <property type="term" value="F:ribosome binding"/>
    <property type="evidence" value="ECO:0007669"/>
    <property type="project" value="TreeGrafter"/>
</dbReference>
<dbReference type="GO" id="GO:0042254">
    <property type="term" value="P:ribosome biogenesis"/>
    <property type="evidence" value="ECO:0007669"/>
    <property type="project" value="UniProtKB-KW"/>
</dbReference>
<dbReference type="CDD" id="cd01894">
    <property type="entry name" value="EngA1"/>
    <property type="match status" value="1"/>
</dbReference>
<dbReference type="CDD" id="cd01895">
    <property type="entry name" value="EngA2"/>
    <property type="match status" value="1"/>
</dbReference>
<dbReference type="FunFam" id="3.30.300.20:FF:000004">
    <property type="entry name" value="GTPase Der"/>
    <property type="match status" value="1"/>
</dbReference>
<dbReference type="FunFam" id="3.40.50.300:FF:000040">
    <property type="entry name" value="GTPase Der"/>
    <property type="match status" value="1"/>
</dbReference>
<dbReference type="FunFam" id="3.40.50.300:FF:000057">
    <property type="entry name" value="GTPase Der"/>
    <property type="match status" value="1"/>
</dbReference>
<dbReference type="Gene3D" id="3.30.300.20">
    <property type="match status" value="1"/>
</dbReference>
<dbReference type="Gene3D" id="3.40.50.300">
    <property type="entry name" value="P-loop containing nucleotide triphosphate hydrolases"/>
    <property type="match status" value="2"/>
</dbReference>
<dbReference type="HAMAP" id="MF_00195">
    <property type="entry name" value="GTPase_Der"/>
    <property type="match status" value="1"/>
</dbReference>
<dbReference type="InterPro" id="IPR031166">
    <property type="entry name" value="G_ENGA"/>
</dbReference>
<dbReference type="InterPro" id="IPR006073">
    <property type="entry name" value="GTP-bd"/>
</dbReference>
<dbReference type="InterPro" id="IPR016484">
    <property type="entry name" value="GTPase_Der"/>
</dbReference>
<dbReference type="InterPro" id="IPR032859">
    <property type="entry name" value="KH_dom-like"/>
</dbReference>
<dbReference type="InterPro" id="IPR015946">
    <property type="entry name" value="KH_dom-like_a/b"/>
</dbReference>
<dbReference type="InterPro" id="IPR027417">
    <property type="entry name" value="P-loop_NTPase"/>
</dbReference>
<dbReference type="InterPro" id="IPR005225">
    <property type="entry name" value="Small_GTP-bd"/>
</dbReference>
<dbReference type="NCBIfam" id="TIGR03594">
    <property type="entry name" value="GTPase_EngA"/>
    <property type="match status" value="1"/>
</dbReference>
<dbReference type="NCBIfam" id="TIGR00231">
    <property type="entry name" value="small_GTP"/>
    <property type="match status" value="2"/>
</dbReference>
<dbReference type="PANTHER" id="PTHR43834">
    <property type="entry name" value="GTPASE DER"/>
    <property type="match status" value="1"/>
</dbReference>
<dbReference type="PANTHER" id="PTHR43834:SF6">
    <property type="entry name" value="GTPASE DER"/>
    <property type="match status" value="1"/>
</dbReference>
<dbReference type="Pfam" id="PF14714">
    <property type="entry name" value="KH_dom-like"/>
    <property type="match status" value="1"/>
</dbReference>
<dbReference type="Pfam" id="PF01926">
    <property type="entry name" value="MMR_HSR1"/>
    <property type="match status" value="2"/>
</dbReference>
<dbReference type="PIRSF" id="PIRSF006485">
    <property type="entry name" value="GTP-binding_EngA"/>
    <property type="match status" value="1"/>
</dbReference>
<dbReference type="SUPFAM" id="SSF52540">
    <property type="entry name" value="P-loop containing nucleoside triphosphate hydrolases"/>
    <property type="match status" value="2"/>
</dbReference>
<dbReference type="PROSITE" id="PS51712">
    <property type="entry name" value="G_ENGA"/>
    <property type="match status" value="2"/>
</dbReference>
<accession>Q74JL6</accession>
<proteinExistence type="inferred from homology"/>
<protein>
    <recommendedName>
        <fullName evidence="1">GTPase Der</fullName>
    </recommendedName>
    <alternativeName>
        <fullName evidence="1">GTP-binding protein EngA</fullName>
    </alternativeName>
</protein>
<organism>
    <name type="scientific">Lactobacillus johnsonii (strain CNCM I-12250 / La1 / NCC 533)</name>
    <dbReference type="NCBI Taxonomy" id="257314"/>
    <lineage>
        <taxon>Bacteria</taxon>
        <taxon>Bacillati</taxon>
        <taxon>Bacillota</taxon>
        <taxon>Bacilli</taxon>
        <taxon>Lactobacillales</taxon>
        <taxon>Lactobacillaceae</taxon>
        <taxon>Lactobacillus</taxon>
    </lineage>
</organism>
<sequence length="435" mass="48689">MSLPVVALVGRPNVGKSTIFNRIINSRVAIVEDKAGVTRDRIYARAEWMGHEFILIDTGGITLDSGEIEEQIKAQAEIAIDEADVIVMLGDVTQHMTNMDETIAKMLYRTKKPVILAINKADNPEQRTDIYDFYSLGLGDPIPVSGSHGTGMGDLLDAIVGEFGDKANQHEDGSIRFSVIGRPNVGKSSLVNAILGEQRVIVSNIEGTTRDAIDTTFTNDGQKYTIVDTAGIRRRGKVYEKTEKYSVLRAISAIEESDITLLVLDASTGIREQDKHVAGYAHDAGRGVIIVVNKWDLPKKDSRSMKDFEDTIRREFQYLDYAPIIFVSAKTGQRVPDILKLVKEVHENQTRRIQSSVLNDLLLEATRITPTPLVNGKRLRIYYMTQVAVTPPTFVVFVNDPELLHFSYQRFLINQLRQNFDFVGTPIKILARKRK</sequence>